<sequence length="575" mass="62059">LMVVTSNADRICTGITSSNSPHVVKTATQGEVNVTGVIPLTTTPTKSHFANLKGTQTRGKLCPNCLNCTDLDVALGRPKCMGNIPSAKASILHEVKPGTSGCFPIMHDRTKIRQLPNLLRGYENIRLSARNVTNAETAPGGPYIVGTSGSCPNVTNGNGFFATMAWAVPKNKTATNPLTVEVPYICTKGEDQITVWGFHSDDETQMVKLYGDSKPQKFTSSANGVTTHYVSQIGGFPNQAEDEGLPQSGRIVVDYMVQKPGKTGTIAYQRGVLLPQKVWCASGRRKVIEGSLPLIGEADCLHEKYGGLNKSKPYYTGEHAKAIGNCPIWVKTPLKLANGTKYRPPAKLLKERGFFGAIAGFLEGGWEGMIAGWHGYTSHGAHGVAVAADLKSTQEAINKITKNLFSLSELEVKNLHRLSGAMDELHNEILELDEKVDDLRADTISSQIELAVLLSNEGIINSEDEHLLALERKLKKMLGPSAVEIGNGCFETKHKCNQTCLDRIAAGTFNAGEFSLPTFDSLNITAASLNDDGLDNHTILLYYSTAASSLAVTLMIAIFIVYMVSRDNVSCSICL</sequence>
<dbReference type="EMBL" id="K00425">
    <property type="protein sequence ID" value="AAA43699.1"/>
    <property type="status" value="ALT_SEQ"/>
    <property type="molecule type" value="Genomic_RNA"/>
</dbReference>
<dbReference type="PDB" id="2RFT">
    <property type="method" value="X-ray"/>
    <property type="resolution" value="2.80 A"/>
    <property type="chains" value="A=9-352, B=353-528"/>
</dbReference>
<dbReference type="PDB" id="2RFU">
    <property type="method" value="X-ray"/>
    <property type="resolution" value="2.80 A"/>
    <property type="chains" value="A=9-352, B=353-528"/>
</dbReference>
<dbReference type="PDB" id="3BT6">
    <property type="method" value="X-ray"/>
    <property type="resolution" value="2.80 A"/>
    <property type="chains" value="A=9-350, B=353-521"/>
</dbReference>
<dbReference type="PDBsum" id="2RFT"/>
<dbReference type="PDBsum" id="2RFU"/>
<dbReference type="PDBsum" id="3BT6"/>
<dbReference type="SMR" id="P03462"/>
<dbReference type="DIP" id="DIP-46215N"/>
<dbReference type="UniLectin" id="P03462"/>
<dbReference type="GlyCosmos" id="P03462">
    <property type="glycosylation" value="10 sites, No reported glycans"/>
</dbReference>
<dbReference type="ABCD" id="P03462">
    <property type="antibodies" value="2 sequenced antibodies"/>
</dbReference>
<dbReference type="EvolutionaryTrace" id="P03462"/>
<dbReference type="GO" id="GO:0020002">
    <property type="term" value="C:host cell plasma membrane"/>
    <property type="evidence" value="ECO:0007669"/>
    <property type="project" value="UniProtKB-SubCell"/>
</dbReference>
<dbReference type="GO" id="GO:0016020">
    <property type="term" value="C:membrane"/>
    <property type="evidence" value="ECO:0007669"/>
    <property type="project" value="UniProtKB-KW"/>
</dbReference>
<dbReference type="GO" id="GO:0019031">
    <property type="term" value="C:viral envelope"/>
    <property type="evidence" value="ECO:0007669"/>
    <property type="project" value="UniProtKB-KW"/>
</dbReference>
<dbReference type="GO" id="GO:0055036">
    <property type="term" value="C:virion membrane"/>
    <property type="evidence" value="ECO:0007669"/>
    <property type="project" value="UniProtKB-SubCell"/>
</dbReference>
<dbReference type="GO" id="GO:0046789">
    <property type="term" value="F:host cell surface receptor binding"/>
    <property type="evidence" value="ECO:0007669"/>
    <property type="project" value="InterPro"/>
</dbReference>
<dbReference type="GO" id="GO:0075509">
    <property type="term" value="P:endocytosis involved in viral entry into host cell"/>
    <property type="evidence" value="ECO:0007669"/>
    <property type="project" value="UniProtKB-KW"/>
</dbReference>
<dbReference type="GO" id="GO:0039654">
    <property type="term" value="P:fusion of virus membrane with host endosome membrane"/>
    <property type="evidence" value="ECO:0007669"/>
    <property type="project" value="UniProtKB-KW"/>
</dbReference>
<dbReference type="GO" id="GO:0019064">
    <property type="term" value="P:fusion of virus membrane with host plasma membrane"/>
    <property type="evidence" value="ECO:0007669"/>
    <property type="project" value="InterPro"/>
</dbReference>
<dbReference type="GO" id="GO:0019062">
    <property type="term" value="P:virion attachment to host cell"/>
    <property type="evidence" value="ECO:0007669"/>
    <property type="project" value="UniProtKB-KW"/>
</dbReference>
<dbReference type="Gene3D" id="3.90.20.10">
    <property type="match status" value="1"/>
</dbReference>
<dbReference type="Gene3D" id="3.90.209.20">
    <property type="match status" value="1"/>
</dbReference>
<dbReference type="Gene3D" id="2.10.77.10">
    <property type="entry name" value="Hemagglutinin Chain A, Domain 2"/>
    <property type="match status" value="1"/>
</dbReference>
<dbReference type="HAMAP" id="MF_04072">
    <property type="entry name" value="INFV_HEMA"/>
    <property type="match status" value="1"/>
</dbReference>
<dbReference type="InterPro" id="IPR008980">
    <property type="entry name" value="Capsid_hemagglutn"/>
</dbReference>
<dbReference type="InterPro" id="IPR013828">
    <property type="entry name" value="Hemagglutn_HA1_a/b_dom_sf"/>
</dbReference>
<dbReference type="InterPro" id="IPR001364">
    <property type="entry name" value="Hemagglutn_influenz_A/B"/>
</dbReference>
<dbReference type="InterPro" id="IPR000386">
    <property type="entry name" value="Hemagglutn_influenz_B"/>
</dbReference>
<dbReference type="Pfam" id="PF00509">
    <property type="entry name" value="Hemagglutinin"/>
    <property type="match status" value="1"/>
</dbReference>
<dbReference type="PRINTS" id="PR00329">
    <property type="entry name" value="HEMAGGLUTN12"/>
</dbReference>
<dbReference type="PRINTS" id="PR00331">
    <property type="entry name" value="HEMAGGLUTN2"/>
</dbReference>
<dbReference type="SUPFAM" id="SSF58064">
    <property type="entry name" value="Influenza hemagglutinin (stalk)"/>
    <property type="match status" value="1"/>
</dbReference>
<dbReference type="SUPFAM" id="SSF49818">
    <property type="entry name" value="Viral protein domain"/>
    <property type="match status" value="1"/>
</dbReference>
<comment type="function">
    <text evidence="1">Binds to sialic acid-containing receptors on the cell surface, bringing about the attachment of the virus particle to the cell. Plays a major role in the determination of host range restriction and virulence. Class I viral fusion protein. Responsible for penetration of the virus into the cell cytoplasm by mediating the fusion of the membrane of the endocytosed virus particle with the endosomal membrane. Low pH in endosomes induce an irreversible conformational change in HA2, releasing the fusion hydrophobic peptide. Several trimers are required to form a competent fusion pore.</text>
</comment>
<comment type="subunit">
    <text evidence="1">Homotrimer of disulfide-linked HA1-HA2.</text>
</comment>
<comment type="subcellular location">
    <subcellularLocation>
        <location evidence="1">Virion membrane</location>
        <topology evidence="1">Single-pass type I membrane protein</topology>
    </subcellularLocation>
    <subcellularLocation>
        <location evidence="1">Host apical cell membrane</location>
        <topology evidence="1">Single-pass type I membrane protein</topology>
    </subcellularLocation>
    <text evidence="1">Targeted to the apical plasma membrane in epithelial polarized cells through a signal present in the transmembrane domain. Associated with glycosphingolipid- and cholesterol-enriched detergent-resistant lipid rafts.</text>
</comment>
<comment type="PTM">
    <text evidence="1">Palmitoylated.</text>
</comment>
<comment type="PTM">
    <text evidence="1">In natural infection, inactive HA is matured into HA1 and HA2 outside the cell by one or more trypsin-like, arginine-specific endoprotease secreted by the bronchial epithelial cells. One identified protease that may be involved in this process is secreted in lungs by club cells.</text>
</comment>
<comment type="miscellaneous">
    <text>Major glycoprotein, comprises over 80% of the envelope proteins present in virus particle.</text>
</comment>
<comment type="miscellaneous">
    <text>The extent of infection into host organism is determined by HA. Influenza viruses bud from the apical surface of polarized epithelial cells (e.g. bronchial epithelial cells) into lumen of lungs and are therefore usually pneumotropic. The reason is that HA is cleaved by tryptase clara which is restricted to lungs. However, HAs of H5 and H7 pantropic avian viruses subtypes can be cleaved by furin and subtilisin-type enzymes, allowing the virus to grow in other organs than lungs.</text>
</comment>
<comment type="miscellaneous">
    <text>The influenza B genome consist of 8 RNA segments. Genetic variation of hemagglutinin and/or neuraminidase genes results in the emergence of new influenza strains. The mechanism of variation can be the result of point mutations or the result of genetic reassortment between segments of two different strains.</text>
</comment>
<comment type="similarity">
    <text evidence="1">Belongs to the influenza viruses hemagglutinin family.</text>
</comment>
<organism>
    <name type="scientific">Influenza B virus (strain B/Hong Kong/8/1973)</name>
    <dbReference type="NCBI Taxonomy" id="427826"/>
    <lineage>
        <taxon>Viruses</taxon>
        <taxon>Riboviria</taxon>
        <taxon>Orthornavirae</taxon>
        <taxon>Negarnaviricota</taxon>
        <taxon>Polyploviricotina</taxon>
        <taxon>Insthoviricetes</taxon>
        <taxon>Articulavirales</taxon>
        <taxon>Orthomyxoviridae</taxon>
        <taxon>Betainfluenzavirus</taxon>
        <taxon>Betainfluenzavirus influenzae</taxon>
        <taxon>Influenza B virus</taxon>
    </lineage>
</organism>
<evidence type="ECO:0000255" key="1">
    <source>
        <dbReference type="HAMAP-Rule" id="MF_04072"/>
    </source>
</evidence>
<evidence type="ECO:0007829" key="2">
    <source>
        <dbReference type="PDB" id="2RFT"/>
    </source>
</evidence>
<evidence type="ECO:0007829" key="3">
    <source>
        <dbReference type="PDB" id="2RFU"/>
    </source>
</evidence>
<protein>
    <recommendedName>
        <fullName evidence="1">Hemagglutinin</fullName>
    </recommendedName>
    <component>
        <recommendedName>
            <fullName evidence="1">Hemagglutinin HA1 chain</fullName>
        </recommendedName>
    </component>
    <component>
        <recommendedName>
            <fullName evidence="1">Hemagglutinin HA2 chain</fullName>
        </recommendedName>
    </component>
</protein>
<name>HEMA_INBHK</name>
<keyword id="KW-0002">3D-structure</keyword>
<keyword id="KW-1015">Disulfide bond</keyword>
<keyword id="KW-1170">Fusion of virus membrane with host endosomal membrane</keyword>
<keyword id="KW-1168">Fusion of virus membrane with host membrane</keyword>
<keyword id="KW-0325">Glycoprotein</keyword>
<keyword id="KW-0348">Hemagglutinin</keyword>
<keyword id="KW-1032">Host cell membrane</keyword>
<keyword id="KW-1043">Host membrane</keyword>
<keyword id="KW-0945">Host-virus interaction</keyword>
<keyword id="KW-0449">Lipoprotein</keyword>
<keyword id="KW-0472">Membrane</keyword>
<keyword id="KW-0564">Palmitate</keyword>
<keyword id="KW-0812">Transmembrane</keyword>
<keyword id="KW-1133">Transmembrane helix</keyword>
<keyword id="KW-1161">Viral attachment to host cell</keyword>
<keyword id="KW-0261">Viral envelope protein</keyword>
<keyword id="KW-1162">Viral penetration into host cytoplasm</keyword>
<keyword id="KW-0946">Virion</keyword>
<keyword id="KW-1164">Virus endocytosis by host</keyword>
<keyword id="KW-1160">Virus entry into host cell</keyword>
<feature type="chain" id="PRO_0000440759" description="Hemagglutinin HA1 chain" evidence="1">
    <location>
        <begin position="1"/>
        <end position="352"/>
    </location>
</feature>
<feature type="chain" id="PRO_0000039107" description="Hemagglutinin HA2 chain" evidence="1">
    <location>
        <begin position="353"/>
        <end position="575"/>
    </location>
</feature>
<feature type="topological domain" description="Extracellular" evidence="1">
    <location>
        <begin position="1"/>
        <end position="543"/>
    </location>
</feature>
<feature type="transmembrane region" description="Helical" evidence="1">
    <location>
        <begin position="544"/>
        <end position="564"/>
    </location>
</feature>
<feature type="topological domain" description="Cytoplasmic" evidence="1">
    <location>
        <begin position="565"/>
        <end position="575"/>
    </location>
</feature>
<feature type="site" description="Cleavage; by host" evidence="1">
    <location>
        <begin position="352"/>
        <end position="353"/>
    </location>
</feature>
<feature type="lipid moiety-binding region" description="S-palmitoyl cysteine; by host" evidence="1">
    <location>
        <position position="571"/>
    </location>
</feature>
<feature type="lipid moiety-binding region" description="S-palmitoyl cysteine; by host" evidence="1">
    <location>
        <position position="574"/>
    </location>
</feature>
<feature type="glycosylation site" description="N-linked (GlcNAc...) asparagine; by host" evidence="1">
    <location>
        <position position="33"/>
    </location>
</feature>
<feature type="glycosylation site" description="N-linked (GlcNAc...) asparagine; by host" evidence="1">
    <location>
        <position position="67"/>
    </location>
</feature>
<feature type="glycosylation site" description="N-linked (GlcNAc...) asparagine; by host" evidence="1">
    <location>
        <position position="131"/>
    </location>
</feature>
<feature type="glycosylation site" description="N-linked (GlcNAc...) asparagine; by host" evidence="1">
    <location>
        <position position="153"/>
    </location>
</feature>
<feature type="glycosylation site" description="N-linked (GlcNAc...) asparagine; by host" evidence="1">
    <location>
        <position position="171"/>
    </location>
</feature>
<feature type="glycosylation site" description="N-linked (GlcNAc...) asparagine; by host" evidence="1">
    <location>
        <position position="309"/>
    </location>
</feature>
<feature type="glycosylation site" description="N-linked (GlcNAc...) asparagine; by host" evidence="1">
    <location>
        <position position="338"/>
    </location>
</feature>
<feature type="glycosylation site" description="N-linked (GlcNAc...) asparagine; by host" evidence="1">
    <location>
        <position position="497"/>
    </location>
</feature>
<feature type="glycosylation site" description="N-linked (GlcNAc...) asparagine; by host" evidence="1">
    <location>
        <position position="523"/>
    </location>
</feature>
<feature type="glycosylation site" description="N-linked (GlcNAc...) asparagine; by host" evidence="1">
    <location>
        <position position="536"/>
    </location>
</feature>
<feature type="disulfide bond" description="Interchain (between HA1 and HA2 chains)" evidence="1">
    <location>
        <begin position="12"/>
        <end position="489"/>
    </location>
</feature>
<feature type="disulfide bond" evidence="1">
    <location>
        <begin position="68"/>
        <end position="80"/>
    </location>
</feature>
<feature type="disulfide bond" evidence="1">
    <location>
        <begin position="102"/>
        <end position="151"/>
    </location>
</feature>
<feature type="disulfide bond" evidence="1">
    <location>
        <begin position="496"/>
        <end position="500"/>
    </location>
</feature>
<feature type="non-terminal residue">
    <location>
        <position position="1"/>
    </location>
</feature>
<feature type="strand" evidence="2">
    <location>
        <begin position="10"/>
        <end position="15"/>
    </location>
</feature>
<feature type="strand" evidence="2">
    <location>
        <begin position="22"/>
        <end position="24"/>
    </location>
</feature>
<feature type="turn" evidence="2">
    <location>
        <begin position="27"/>
        <end position="29"/>
    </location>
</feature>
<feature type="strand" evidence="2">
    <location>
        <begin position="31"/>
        <end position="35"/>
    </location>
</feature>
<feature type="strand" evidence="2">
    <location>
        <begin position="37"/>
        <end position="39"/>
    </location>
</feature>
<feature type="strand" evidence="3">
    <location>
        <begin position="51"/>
        <end position="55"/>
    </location>
</feature>
<feature type="strand" evidence="2">
    <location>
        <begin position="59"/>
        <end position="61"/>
    </location>
</feature>
<feature type="strand" evidence="2">
    <location>
        <begin position="63"/>
        <end position="65"/>
    </location>
</feature>
<feature type="helix" evidence="2">
    <location>
        <begin position="70"/>
        <end position="75"/>
    </location>
</feature>
<feature type="strand" evidence="2">
    <location>
        <begin position="88"/>
        <end position="92"/>
    </location>
</feature>
<feature type="strand" evidence="2">
    <location>
        <begin position="101"/>
        <end position="103"/>
    </location>
</feature>
<feature type="helix" evidence="2">
    <location>
        <begin position="107"/>
        <end position="109"/>
    </location>
</feature>
<feature type="helix" evidence="2">
    <location>
        <begin position="111"/>
        <end position="114"/>
    </location>
</feature>
<feature type="helix" evidence="2">
    <location>
        <begin position="115"/>
        <end position="120"/>
    </location>
</feature>
<feature type="strand" evidence="2">
    <location>
        <begin position="122"/>
        <end position="127"/>
    </location>
</feature>
<feature type="strand" evidence="3">
    <location>
        <begin position="129"/>
        <end position="131"/>
    </location>
</feature>
<feature type="turn" evidence="2">
    <location>
        <begin position="135"/>
        <end position="137"/>
    </location>
</feature>
<feature type="strand" evidence="2">
    <location>
        <begin position="138"/>
        <end position="141"/>
    </location>
</feature>
<feature type="strand" evidence="2">
    <location>
        <begin position="143"/>
        <end position="146"/>
    </location>
</feature>
<feature type="strand" evidence="2">
    <location>
        <begin position="148"/>
        <end position="151"/>
    </location>
</feature>
<feature type="strand" evidence="2">
    <location>
        <begin position="154"/>
        <end position="157"/>
    </location>
</feature>
<feature type="strand" evidence="2">
    <location>
        <begin position="164"/>
        <end position="171"/>
    </location>
</feature>
<feature type="strand" evidence="2">
    <location>
        <begin position="178"/>
        <end position="180"/>
    </location>
</feature>
<feature type="strand" evidence="2">
    <location>
        <begin position="191"/>
        <end position="200"/>
    </location>
</feature>
<feature type="helix" evidence="2">
    <location>
        <begin position="203"/>
        <end position="209"/>
    </location>
</feature>
<feature type="strand" evidence="2">
    <location>
        <begin position="217"/>
        <end position="222"/>
    </location>
</feature>
<feature type="strand" evidence="2">
    <location>
        <begin position="225"/>
        <end position="230"/>
    </location>
</feature>
<feature type="strand" evidence="2">
    <location>
        <begin position="250"/>
        <end position="258"/>
    </location>
</feature>
<feature type="strand" evidence="2">
    <location>
        <begin position="265"/>
        <end position="268"/>
    </location>
</feature>
<feature type="strand" evidence="2">
    <location>
        <begin position="270"/>
        <end position="275"/>
    </location>
</feature>
<feature type="strand" evidence="2">
    <location>
        <begin position="279"/>
        <end position="283"/>
    </location>
</feature>
<feature type="strand" evidence="2">
    <location>
        <begin position="286"/>
        <end position="289"/>
    </location>
</feature>
<feature type="strand" evidence="2">
    <location>
        <begin position="296"/>
        <end position="302"/>
    </location>
</feature>
<feature type="turn" evidence="2">
    <location>
        <begin position="303"/>
        <end position="305"/>
    </location>
</feature>
<feature type="strand" evidence="2">
    <location>
        <begin position="306"/>
        <end position="308"/>
    </location>
</feature>
<feature type="strand" evidence="2">
    <location>
        <begin position="312"/>
        <end position="315"/>
    </location>
</feature>
<feature type="strand" evidence="2">
    <location>
        <begin position="322"/>
        <end position="325"/>
    </location>
</feature>
<feature type="strand" evidence="2">
    <location>
        <begin position="335"/>
        <end position="337"/>
    </location>
</feature>
<feature type="helix" evidence="2">
    <location>
        <begin position="354"/>
        <end position="358"/>
    </location>
</feature>
<feature type="strand" evidence="2">
    <location>
        <begin position="373"/>
        <end position="380"/>
    </location>
</feature>
<feature type="strand" evidence="2">
    <location>
        <begin position="383"/>
        <end position="386"/>
    </location>
</feature>
<feature type="helix" evidence="2">
    <location>
        <begin position="392"/>
        <end position="407"/>
    </location>
</feature>
<feature type="turn" evidence="2">
    <location>
        <begin position="423"/>
        <end position="425"/>
    </location>
</feature>
<feature type="helix" evidence="2">
    <location>
        <begin position="427"/>
        <end position="478"/>
    </location>
</feature>
<feature type="strand" evidence="2">
    <location>
        <begin position="482"/>
        <end position="484"/>
    </location>
</feature>
<feature type="strand" evidence="2">
    <location>
        <begin position="486"/>
        <end position="491"/>
    </location>
</feature>
<feature type="helix" evidence="2">
    <location>
        <begin position="498"/>
        <end position="505"/>
    </location>
</feature>
<feature type="strand" evidence="2">
    <location>
        <begin position="513"/>
        <end position="515"/>
    </location>
</feature>
<gene>
    <name evidence="1" type="primary">HA</name>
</gene>
<reference key="1">
    <citation type="journal article" date="1983" name="Proc. Natl. Acad. Sci. U.S.A.">
        <title>Sequential mutations in hemagglutinins of influenza B virus isolates: definition of antigenic domains.</title>
        <authorList>
            <person name="Krystal M."/>
            <person name="Young J.F."/>
            <person name="Palese P."/>
            <person name="Wilson I.A."/>
            <person name="Skehel J.J."/>
            <person name="Wiley D.C."/>
        </authorList>
    </citation>
    <scope>NUCLEOTIDE SEQUENCE [GENOMIC RNA]</scope>
</reference>
<reference key="2">
    <citation type="journal article" date="1984" name="Proc. Natl. Acad. Sci. U.S.A.">
        <authorList>
            <person name="Krystal M."/>
            <person name="Young J.F."/>
            <person name="Palese P."/>
            <person name="Wilson I.A."/>
            <person name="Skehel J.J."/>
            <person name="Wiley D.C."/>
        </authorList>
    </citation>
    <scope>ERRATUM OF PUBMED:6192436</scope>
    <scope>SEQUENCE REVISION</scope>
</reference>
<proteinExistence type="evidence at protein level"/>
<organismHost>
    <name type="scientific">Homo sapiens</name>
    <name type="common">Human</name>
    <dbReference type="NCBI Taxonomy" id="9606"/>
</organismHost>
<accession>P03462</accession>